<name>PAFB_MYCTO</name>
<protein>
    <recommendedName>
        <fullName>Protein PafB</fullName>
    </recommendedName>
    <alternativeName>
        <fullName>Proteasome accessory factor B</fullName>
    </alternativeName>
</protein>
<proteinExistence type="inferred from homology"/>
<reference key="1">
    <citation type="journal article" date="2002" name="J. Bacteriol.">
        <title>Whole-genome comparison of Mycobacterium tuberculosis clinical and laboratory strains.</title>
        <authorList>
            <person name="Fleischmann R.D."/>
            <person name="Alland D."/>
            <person name="Eisen J.A."/>
            <person name="Carpenter L."/>
            <person name="White O."/>
            <person name="Peterson J.D."/>
            <person name="DeBoy R.T."/>
            <person name="Dodson R.J."/>
            <person name="Gwinn M.L."/>
            <person name="Haft D.H."/>
            <person name="Hickey E.K."/>
            <person name="Kolonay J.F."/>
            <person name="Nelson W.C."/>
            <person name="Umayam L.A."/>
            <person name="Ermolaeva M.D."/>
            <person name="Salzberg S.L."/>
            <person name="Delcher A."/>
            <person name="Utterback T.R."/>
            <person name="Weidman J.F."/>
            <person name="Khouri H.M."/>
            <person name="Gill J."/>
            <person name="Mikula A."/>
            <person name="Bishai W."/>
            <person name="Jacobs W.R. Jr."/>
            <person name="Venter J.C."/>
            <person name="Fraser C.M."/>
        </authorList>
    </citation>
    <scope>NUCLEOTIDE SEQUENCE [LARGE SCALE GENOMIC DNA]</scope>
    <source>
        <strain>CDC 1551 / Oshkosh</strain>
    </source>
</reference>
<keyword id="KW-1185">Reference proteome</keyword>
<dbReference type="EMBL" id="AE000516">
    <property type="protein sequence ID" value="AAK46438.1"/>
    <property type="molecule type" value="Genomic_DNA"/>
</dbReference>
<dbReference type="PIR" id="C70768">
    <property type="entry name" value="C70768"/>
</dbReference>
<dbReference type="RefSeq" id="WP_003410775.1">
    <property type="nucleotide sequence ID" value="NZ_KK341227.1"/>
</dbReference>
<dbReference type="SMR" id="P9WIM0"/>
<dbReference type="KEGG" id="mtc:MT2157"/>
<dbReference type="PATRIC" id="fig|83331.31.peg.2326"/>
<dbReference type="HOGENOM" id="CLU_041141_3_1_11"/>
<dbReference type="Proteomes" id="UP000001020">
    <property type="component" value="Chromosome"/>
</dbReference>
<dbReference type="InterPro" id="IPR051534">
    <property type="entry name" value="CBASS_pafABC_assoc_protein"/>
</dbReference>
<dbReference type="InterPro" id="IPR026881">
    <property type="entry name" value="WYL_dom"/>
</dbReference>
<dbReference type="PANTHER" id="PTHR34580">
    <property type="match status" value="1"/>
</dbReference>
<dbReference type="PANTHER" id="PTHR34580:SF3">
    <property type="entry name" value="PROTEIN PAFB"/>
    <property type="match status" value="1"/>
</dbReference>
<dbReference type="Pfam" id="PF13280">
    <property type="entry name" value="WYL"/>
    <property type="match status" value="1"/>
</dbReference>
<dbReference type="PROSITE" id="PS52050">
    <property type="entry name" value="WYL"/>
    <property type="match status" value="1"/>
</dbReference>
<gene>
    <name type="primary">pafB</name>
    <name type="ordered locus">MT2157</name>
</gene>
<feature type="chain" id="PRO_0000427982" description="Protein PafB">
    <location>
        <begin position="1"/>
        <end position="332"/>
    </location>
</feature>
<feature type="domain" description="WYL" evidence="2">
    <location>
        <begin position="147"/>
        <end position="227"/>
    </location>
</feature>
<accession>P9WIM0</accession>
<accession>A0A112</accession>
<accession>L0TA73</accession>
<accession>P64941</accession>
<accession>Q10705</accession>
<comment type="function">
    <text evidence="1">Part of the pafABC operon, however PafB does not seem to be involved in pupylation or substrate degradation.</text>
</comment>
<comment type="subunit">
    <text evidence="1">Interacts with PafC; with which it probably forms a heterocomplex.</text>
</comment>
<comment type="similarity">
    <text evidence="3">Belongs to the PafB family.</text>
</comment>
<organism>
    <name type="scientific">Mycobacterium tuberculosis (strain CDC 1551 / Oshkosh)</name>
    <dbReference type="NCBI Taxonomy" id="83331"/>
    <lineage>
        <taxon>Bacteria</taxon>
        <taxon>Bacillati</taxon>
        <taxon>Actinomycetota</taxon>
        <taxon>Actinomycetes</taxon>
        <taxon>Mycobacteriales</taxon>
        <taxon>Mycobacteriaceae</taxon>
        <taxon>Mycobacterium</taxon>
        <taxon>Mycobacterium tuberculosis complex</taxon>
    </lineage>
</organism>
<evidence type="ECO:0000250" key="1"/>
<evidence type="ECO:0000255" key="2">
    <source>
        <dbReference type="PROSITE-ProRule" id="PRU01395"/>
    </source>
</evidence>
<evidence type="ECO:0000305" key="3"/>
<sequence>MATSKVERLVNLVIALLSTRGYITAEKIRSSVAGYSDSPSVEAFSRMFERDKNELRDLGIPLEVGRVSALEPTEGYRINRDAYALSPVELTPDEAAAVAVATQLWESPELITATQGALLKLRAAGVDVDPLDTGAPVAIASAAAVSGLRGSEDVLGILLSAIDSGQVVQFSHRSSRAEPYTVRTVEPWGVVTEKGRWYLVGHDRDRDATRVFRLSRIGAQVTPIGPAGATTVPAGVDLRSIVAQKVTEVPTGEQATVWVAEGRATALRRAGRSAGPRQLGGRDGEVIELEIRSSDRLAREITGYGADAIVLQPGSLRDDVLARLRAQAGALA</sequence>